<evidence type="ECO:0000255" key="1">
    <source>
        <dbReference type="HAMAP-Rule" id="MF_01712"/>
    </source>
</evidence>
<protein>
    <recommendedName>
        <fullName evidence="1">Nickel import ATP-binding protein NikE</fullName>
        <ecNumber evidence="1">7.2.2.11</ecNumber>
    </recommendedName>
</protein>
<accession>Q8X4L6</accession>
<accession>Q7AA44</accession>
<dbReference type="EC" id="7.2.2.11" evidence="1"/>
<dbReference type="EMBL" id="AE005174">
    <property type="protein sequence ID" value="AAG58607.1"/>
    <property type="molecule type" value="Genomic_DNA"/>
</dbReference>
<dbReference type="EMBL" id="BA000007">
    <property type="protein sequence ID" value="BAB37770.1"/>
    <property type="molecule type" value="Genomic_DNA"/>
</dbReference>
<dbReference type="PIR" id="C86018">
    <property type="entry name" value="C86018"/>
</dbReference>
<dbReference type="PIR" id="C91172">
    <property type="entry name" value="C91172"/>
</dbReference>
<dbReference type="RefSeq" id="NP_312374.1">
    <property type="nucleotide sequence ID" value="NC_002695.1"/>
</dbReference>
<dbReference type="RefSeq" id="WP_000173697.1">
    <property type="nucleotide sequence ID" value="NZ_VOAI01000004.1"/>
</dbReference>
<dbReference type="SMR" id="Q8X4L6"/>
<dbReference type="STRING" id="155864.Z4872"/>
<dbReference type="GeneID" id="915802"/>
<dbReference type="KEGG" id="ece:Z4872"/>
<dbReference type="KEGG" id="ecs:ECs_4347"/>
<dbReference type="PATRIC" id="fig|386585.9.peg.4540"/>
<dbReference type="eggNOG" id="COG1124">
    <property type="taxonomic scope" value="Bacteria"/>
</dbReference>
<dbReference type="HOGENOM" id="CLU_000604_1_23_6"/>
<dbReference type="OMA" id="CHFQMEK"/>
<dbReference type="Proteomes" id="UP000000558">
    <property type="component" value="Chromosome"/>
</dbReference>
<dbReference type="Proteomes" id="UP000002519">
    <property type="component" value="Chromosome"/>
</dbReference>
<dbReference type="GO" id="GO:0005886">
    <property type="term" value="C:plasma membrane"/>
    <property type="evidence" value="ECO:0007669"/>
    <property type="project" value="UniProtKB-SubCell"/>
</dbReference>
<dbReference type="GO" id="GO:0015413">
    <property type="term" value="F:ABC-type nickel transporter activity"/>
    <property type="evidence" value="ECO:0007669"/>
    <property type="project" value="UniProtKB-EC"/>
</dbReference>
<dbReference type="GO" id="GO:0005524">
    <property type="term" value="F:ATP binding"/>
    <property type="evidence" value="ECO:0007669"/>
    <property type="project" value="UniProtKB-KW"/>
</dbReference>
<dbReference type="GO" id="GO:0016887">
    <property type="term" value="F:ATP hydrolysis activity"/>
    <property type="evidence" value="ECO:0007669"/>
    <property type="project" value="InterPro"/>
</dbReference>
<dbReference type="GO" id="GO:0016151">
    <property type="term" value="F:nickel cation binding"/>
    <property type="evidence" value="ECO:0007669"/>
    <property type="project" value="InterPro"/>
</dbReference>
<dbReference type="CDD" id="cd03257">
    <property type="entry name" value="ABC_NikE_OppD_transporters"/>
    <property type="match status" value="1"/>
</dbReference>
<dbReference type="FunFam" id="3.40.50.300:FF:001020">
    <property type="entry name" value="Nickel import ATP-binding protein NikE"/>
    <property type="match status" value="1"/>
</dbReference>
<dbReference type="Gene3D" id="3.40.50.300">
    <property type="entry name" value="P-loop containing nucleotide triphosphate hydrolases"/>
    <property type="match status" value="1"/>
</dbReference>
<dbReference type="InterPro" id="IPR003593">
    <property type="entry name" value="AAA+_ATPase"/>
</dbReference>
<dbReference type="InterPro" id="IPR050319">
    <property type="entry name" value="ABC_transp_ATP-bind"/>
</dbReference>
<dbReference type="InterPro" id="IPR003439">
    <property type="entry name" value="ABC_transporter-like_ATP-bd"/>
</dbReference>
<dbReference type="InterPro" id="IPR017871">
    <property type="entry name" value="ABC_transporter-like_CS"/>
</dbReference>
<dbReference type="InterPro" id="IPR014137">
    <property type="entry name" value="Nickel_NikE"/>
</dbReference>
<dbReference type="InterPro" id="IPR027417">
    <property type="entry name" value="P-loop_NTPase"/>
</dbReference>
<dbReference type="NCBIfam" id="TIGR02769">
    <property type="entry name" value="nickel_nikE"/>
    <property type="match status" value="1"/>
</dbReference>
<dbReference type="NCBIfam" id="NF007739">
    <property type="entry name" value="PRK10419.1"/>
    <property type="match status" value="1"/>
</dbReference>
<dbReference type="PANTHER" id="PTHR43776:SF7">
    <property type="entry name" value="D,D-DIPEPTIDE TRANSPORT ATP-BINDING PROTEIN DDPF-RELATED"/>
    <property type="match status" value="1"/>
</dbReference>
<dbReference type="PANTHER" id="PTHR43776">
    <property type="entry name" value="TRANSPORT ATP-BINDING PROTEIN"/>
    <property type="match status" value="1"/>
</dbReference>
<dbReference type="Pfam" id="PF00005">
    <property type="entry name" value="ABC_tran"/>
    <property type="match status" value="1"/>
</dbReference>
<dbReference type="SMART" id="SM00382">
    <property type="entry name" value="AAA"/>
    <property type="match status" value="1"/>
</dbReference>
<dbReference type="SUPFAM" id="SSF52540">
    <property type="entry name" value="P-loop containing nucleoside triphosphate hydrolases"/>
    <property type="match status" value="1"/>
</dbReference>
<dbReference type="PROSITE" id="PS00211">
    <property type="entry name" value="ABC_TRANSPORTER_1"/>
    <property type="match status" value="1"/>
</dbReference>
<dbReference type="PROSITE" id="PS50893">
    <property type="entry name" value="ABC_TRANSPORTER_2"/>
    <property type="match status" value="1"/>
</dbReference>
<dbReference type="PROSITE" id="PS51248">
    <property type="entry name" value="NIKE"/>
    <property type="match status" value="1"/>
</dbReference>
<comment type="function">
    <text evidence="1">Part of the ABC transporter complex NikABCDE involved in nickel import. Responsible for energy coupling to the transport system.</text>
</comment>
<comment type="catalytic activity">
    <reaction evidence="1">
        <text>Ni(2+)(out) + ATP + H2O = Ni(2+)(in) + ADP + phosphate + H(+)</text>
        <dbReference type="Rhea" id="RHEA:15557"/>
        <dbReference type="ChEBI" id="CHEBI:15377"/>
        <dbReference type="ChEBI" id="CHEBI:15378"/>
        <dbReference type="ChEBI" id="CHEBI:30616"/>
        <dbReference type="ChEBI" id="CHEBI:43474"/>
        <dbReference type="ChEBI" id="CHEBI:49786"/>
        <dbReference type="ChEBI" id="CHEBI:456216"/>
        <dbReference type="EC" id="7.2.2.11"/>
    </reaction>
</comment>
<comment type="subunit">
    <text evidence="1">The complex is composed of two ATP-binding proteins (NikD and NikE), two transmembrane proteins (NikB and NikC) and a solute-binding protein (NikA).</text>
</comment>
<comment type="subcellular location">
    <subcellularLocation>
        <location evidence="1">Cell inner membrane</location>
        <topology evidence="1">Peripheral membrane protein</topology>
    </subcellularLocation>
</comment>
<comment type="similarity">
    <text evidence="1">Belongs to the ABC transporter superfamily. Nickel importer (TC 3.A.1.5.3) family.</text>
</comment>
<gene>
    <name evidence="1" type="primary">nikE</name>
    <name type="ordered locus">Z4872</name>
    <name type="ordered locus">ECs4347</name>
</gene>
<name>NIKE_ECO57</name>
<sequence>MTLLNVSDLSHHYAHGGFSGKHQHQAVLNNVSLTLKSGETVALLGRSGCGKSTLSRLLVGLESPSQGNISWRGESLAKLNRAQRKAFRRDIQMVFQDSISAVNPRKTVREILREPMRHLLSLKKSEQLARASEMLHAVDLDDSVLDKRPPQLSGGQLQRVCLARALAVEPKLLILDEAVSNLDLVLQAGVIRLLKKLQQQFGTACLFITHDLRLVERFCQRVMVMDNGQIVETQAVGEKLTFSSDAGRVLQNAILPAFPVRRRATEKV</sequence>
<reference key="1">
    <citation type="journal article" date="2001" name="Nature">
        <title>Genome sequence of enterohaemorrhagic Escherichia coli O157:H7.</title>
        <authorList>
            <person name="Perna N.T."/>
            <person name="Plunkett G. III"/>
            <person name="Burland V."/>
            <person name="Mau B."/>
            <person name="Glasner J.D."/>
            <person name="Rose D.J."/>
            <person name="Mayhew G.F."/>
            <person name="Evans P.S."/>
            <person name="Gregor J."/>
            <person name="Kirkpatrick H.A."/>
            <person name="Posfai G."/>
            <person name="Hackett J."/>
            <person name="Klink S."/>
            <person name="Boutin A."/>
            <person name="Shao Y."/>
            <person name="Miller L."/>
            <person name="Grotbeck E.J."/>
            <person name="Davis N.W."/>
            <person name="Lim A."/>
            <person name="Dimalanta E.T."/>
            <person name="Potamousis K."/>
            <person name="Apodaca J."/>
            <person name="Anantharaman T.S."/>
            <person name="Lin J."/>
            <person name="Yen G."/>
            <person name="Schwartz D.C."/>
            <person name="Welch R.A."/>
            <person name="Blattner F.R."/>
        </authorList>
    </citation>
    <scope>NUCLEOTIDE SEQUENCE [LARGE SCALE GENOMIC DNA]</scope>
    <source>
        <strain>O157:H7 / EDL933 / ATCC 700927 / EHEC</strain>
    </source>
</reference>
<reference key="2">
    <citation type="journal article" date="2001" name="DNA Res.">
        <title>Complete genome sequence of enterohemorrhagic Escherichia coli O157:H7 and genomic comparison with a laboratory strain K-12.</title>
        <authorList>
            <person name="Hayashi T."/>
            <person name="Makino K."/>
            <person name="Ohnishi M."/>
            <person name="Kurokawa K."/>
            <person name="Ishii K."/>
            <person name="Yokoyama K."/>
            <person name="Han C.-G."/>
            <person name="Ohtsubo E."/>
            <person name="Nakayama K."/>
            <person name="Murata T."/>
            <person name="Tanaka M."/>
            <person name="Tobe T."/>
            <person name="Iida T."/>
            <person name="Takami H."/>
            <person name="Honda T."/>
            <person name="Sasakawa C."/>
            <person name="Ogasawara N."/>
            <person name="Yasunaga T."/>
            <person name="Kuhara S."/>
            <person name="Shiba T."/>
            <person name="Hattori M."/>
            <person name="Shinagawa H."/>
        </authorList>
    </citation>
    <scope>NUCLEOTIDE SEQUENCE [LARGE SCALE GENOMIC DNA]</scope>
    <source>
        <strain>O157:H7 / Sakai / RIMD 0509952 / EHEC</strain>
    </source>
</reference>
<organism>
    <name type="scientific">Escherichia coli O157:H7</name>
    <dbReference type="NCBI Taxonomy" id="83334"/>
    <lineage>
        <taxon>Bacteria</taxon>
        <taxon>Pseudomonadati</taxon>
        <taxon>Pseudomonadota</taxon>
        <taxon>Gammaproteobacteria</taxon>
        <taxon>Enterobacterales</taxon>
        <taxon>Enterobacteriaceae</taxon>
        <taxon>Escherichia</taxon>
    </lineage>
</organism>
<proteinExistence type="inferred from homology"/>
<keyword id="KW-0067">ATP-binding</keyword>
<keyword id="KW-0997">Cell inner membrane</keyword>
<keyword id="KW-1003">Cell membrane</keyword>
<keyword id="KW-0406">Ion transport</keyword>
<keyword id="KW-0472">Membrane</keyword>
<keyword id="KW-0533">Nickel</keyword>
<keyword id="KW-0921">Nickel transport</keyword>
<keyword id="KW-0547">Nucleotide-binding</keyword>
<keyword id="KW-1185">Reference proteome</keyword>
<keyword id="KW-1278">Translocase</keyword>
<keyword id="KW-0813">Transport</keyword>
<feature type="chain" id="PRO_0000092629" description="Nickel import ATP-binding protein NikE">
    <location>
        <begin position="1"/>
        <end position="268"/>
    </location>
</feature>
<feature type="domain" description="ABC transporter" evidence="1">
    <location>
        <begin position="4"/>
        <end position="252"/>
    </location>
</feature>
<feature type="binding site" evidence="1">
    <location>
        <begin position="45"/>
        <end position="52"/>
    </location>
    <ligand>
        <name>ATP</name>
        <dbReference type="ChEBI" id="CHEBI:30616"/>
    </ligand>
</feature>